<protein>
    <recommendedName>
        <fullName evidence="1">ATP synthase gamma chain</fullName>
    </recommendedName>
    <alternativeName>
        <fullName evidence="1">ATP synthase F1 sector gamma subunit</fullName>
    </alternativeName>
    <alternativeName>
        <fullName evidence="1">F-ATPase gamma subunit</fullName>
    </alternativeName>
</protein>
<keyword id="KW-0066">ATP synthesis</keyword>
<keyword id="KW-1003">Cell membrane</keyword>
<keyword id="KW-0139">CF(1)</keyword>
<keyword id="KW-0375">Hydrogen ion transport</keyword>
<keyword id="KW-0406">Ion transport</keyword>
<keyword id="KW-0472">Membrane</keyword>
<keyword id="KW-1185">Reference proteome</keyword>
<keyword id="KW-0813">Transport</keyword>
<evidence type="ECO:0000255" key="1">
    <source>
        <dbReference type="HAMAP-Rule" id="MF_00815"/>
    </source>
</evidence>
<dbReference type="EMBL" id="BX248356">
    <property type="protein sequence ID" value="CAE49571.1"/>
    <property type="molecule type" value="Genomic_DNA"/>
</dbReference>
<dbReference type="RefSeq" id="WP_003851103.1">
    <property type="nucleotide sequence ID" value="NC_002935.2"/>
</dbReference>
<dbReference type="SMR" id="Q6NHT0"/>
<dbReference type="STRING" id="257309.DIP1051"/>
<dbReference type="KEGG" id="cdi:DIP1051"/>
<dbReference type="HOGENOM" id="CLU_050669_0_0_11"/>
<dbReference type="Proteomes" id="UP000002198">
    <property type="component" value="Chromosome"/>
</dbReference>
<dbReference type="GO" id="GO:0005886">
    <property type="term" value="C:plasma membrane"/>
    <property type="evidence" value="ECO:0007669"/>
    <property type="project" value="UniProtKB-SubCell"/>
</dbReference>
<dbReference type="GO" id="GO:0045259">
    <property type="term" value="C:proton-transporting ATP synthase complex"/>
    <property type="evidence" value="ECO:0007669"/>
    <property type="project" value="UniProtKB-KW"/>
</dbReference>
<dbReference type="GO" id="GO:0005524">
    <property type="term" value="F:ATP binding"/>
    <property type="evidence" value="ECO:0007669"/>
    <property type="project" value="UniProtKB-UniRule"/>
</dbReference>
<dbReference type="GO" id="GO:0046933">
    <property type="term" value="F:proton-transporting ATP synthase activity, rotational mechanism"/>
    <property type="evidence" value="ECO:0007669"/>
    <property type="project" value="UniProtKB-UniRule"/>
</dbReference>
<dbReference type="GO" id="GO:0042777">
    <property type="term" value="P:proton motive force-driven plasma membrane ATP synthesis"/>
    <property type="evidence" value="ECO:0007669"/>
    <property type="project" value="UniProtKB-UniRule"/>
</dbReference>
<dbReference type="CDD" id="cd12151">
    <property type="entry name" value="F1-ATPase_gamma"/>
    <property type="match status" value="1"/>
</dbReference>
<dbReference type="Gene3D" id="3.40.1380.10">
    <property type="match status" value="1"/>
</dbReference>
<dbReference type="Gene3D" id="1.10.287.80">
    <property type="entry name" value="ATP synthase, gamma subunit, helix hairpin domain"/>
    <property type="match status" value="2"/>
</dbReference>
<dbReference type="HAMAP" id="MF_00815">
    <property type="entry name" value="ATP_synth_gamma_bact"/>
    <property type="match status" value="1"/>
</dbReference>
<dbReference type="InterPro" id="IPR035968">
    <property type="entry name" value="ATP_synth_F1_ATPase_gsu"/>
</dbReference>
<dbReference type="InterPro" id="IPR000131">
    <property type="entry name" value="ATP_synth_F1_gsu"/>
</dbReference>
<dbReference type="InterPro" id="IPR023632">
    <property type="entry name" value="ATP_synth_F1_gsu_CS"/>
</dbReference>
<dbReference type="NCBIfam" id="TIGR01146">
    <property type="entry name" value="ATPsyn_F1gamma"/>
    <property type="match status" value="1"/>
</dbReference>
<dbReference type="NCBIfam" id="NF004145">
    <property type="entry name" value="PRK05621.1-2"/>
    <property type="match status" value="1"/>
</dbReference>
<dbReference type="PANTHER" id="PTHR11693">
    <property type="entry name" value="ATP SYNTHASE GAMMA CHAIN"/>
    <property type="match status" value="1"/>
</dbReference>
<dbReference type="PANTHER" id="PTHR11693:SF22">
    <property type="entry name" value="ATP SYNTHASE SUBUNIT GAMMA, MITOCHONDRIAL"/>
    <property type="match status" value="1"/>
</dbReference>
<dbReference type="Pfam" id="PF00231">
    <property type="entry name" value="ATP-synt"/>
    <property type="match status" value="1"/>
</dbReference>
<dbReference type="PRINTS" id="PR00126">
    <property type="entry name" value="ATPASEGAMMA"/>
</dbReference>
<dbReference type="SUPFAM" id="SSF52943">
    <property type="entry name" value="ATP synthase (F1-ATPase), gamma subunit"/>
    <property type="match status" value="1"/>
</dbReference>
<dbReference type="PROSITE" id="PS00153">
    <property type="entry name" value="ATPASE_GAMMA"/>
    <property type="match status" value="1"/>
</dbReference>
<reference key="1">
    <citation type="journal article" date="2003" name="Nucleic Acids Res.">
        <title>The complete genome sequence and analysis of Corynebacterium diphtheriae NCTC13129.</title>
        <authorList>
            <person name="Cerdeno-Tarraga A.-M."/>
            <person name="Efstratiou A."/>
            <person name="Dover L.G."/>
            <person name="Holden M.T.G."/>
            <person name="Pallen M.J."/>
            <person name="Bentley S.D."/>
            <person name="Besra G.S."/>
            <person name="Churcher C.M."/>
            <person name="James K.D."/>
            <person name="De Zoysa A."/>
            <person name="Chillingworth T."/>
            <person name="Cronin A."/>
            <person name="Dowd L."/>
            <person name="Feltwell T."/>
            <person name="Hamlin N."/>
            <person name="Holroyd S."/>
            <person name="Jagels K."/>
            <person name="Moule S."/>
            <person name="Quail M.A."/>
            <person name="Rabbinowitsch E."/>
            <person name="Rutherford K.M."/>
            <person name="Thomson N.R."/>
            <person name="Unwin L."/>
            <person name="Whitehead S."/>
            <person name="Barrell B.G."/>
            <person name="Parkhill J."/>
        </authorList>
    </citation>
    <scope>NUCLEOTIDE SEQUENCE [LARGE SCALE GENOMIC DNA]</scope>
    <source>
        <strain>ATCC 700971 / NCTC 13129 / Biotype gravis</strain>
    </source>
</reference>
<organism>
    <name type="scientific">Corynebacterium diphtheriae (strain ATCC 700971 / NCTC 13129 / Biotype gravis)</name>
    <dbReference type="NCBI Taxonomy" id="257309"/>
    <lineage>
        <taxon>Bacteria</taxon>
        <taxon>Bacillati</taxon>
        <taxon>Actinomycetota</taxon>
        <taxon>Actinomycetes</taxon>
        <taxon>Mycobacteriales</taxon>
        <taxon>Corynebacteriaceae</taxon>
        <taxon>Corynebacterium</taxon>
    </lineage>
</organism>
<proteinExistence type="inferred from homology"/>
<gene>
    <name evidence="1" type="primary">atpG</name>
    <name type="ordered locus">DIP1051</name>
</gene>
<comment type="function">
    <text evidence="1">Produces ATP from ADP in the presence of a proton gradient across the membrane. The gamma chain is believed to be important in regulating ATPase activity and the flow of protons through the CF(0) complex.</text>
</comment>
<comment type="subunit">
    <text evidence="1">F-type ATPases have 2 components, CF(1) - the catalytic core - and CF(0) - the membrane proton channel. CF(1) has five subunits: alpha(3), beta(3), gamma(1), delta(1), epsilon(1). CF(0) has three main subunits: a, b and c.</text>
</comment>
<comment type="subcellular location">
    <subcellularLocation>
        <location evidence="1">Cell membrane</location>
        <topology evidence="1">Peripheral membrane protein</topology>
    </subcellularLocation>
</comment>
<comment type="similarity">
    <text evidence="1">Belongs to the ATPase gamma chain family.</text>
</comment>
<feature type="chain" id="PRO_0000073270" description="ATP synthase gamma chain">
    <location>
        <begin position="1"/>
        <end position="325"/>
    </location>
</feature>
<accession>Q6NHT0</accession>
<sequence>MANLRELRDRIRSVNSTKKITKAQELIATSRITKAQARVEASQPYATEIHKVMERLAAASSLEHPMLREREGGKRAAVLVVSSDRGMAGGYNYNVFKKAAELEKLLEENGYEVVRYVTGNKGVGYYKFRGQEVAGAWTGFSQDPSWEETHDVRRHLIDGFNASSNGTARYRDGLNTDEGQEIQGFDQVHVVYTEFESMLTQTARAHQLLPIEPVIETVEIPEADGILDQSGEPTPDVEFEPDADTLLEALLPQYVSRSLFAMFLEAAAAESASRRNAMKSATDNATALVKDLSRVANQARQAQITQEITEIVGGASALGDSGESD</sequence>
<name>ATPG_CORDI</name>